<evidence type="ECO:0000250" key="1">
    <source>
        <dbReference type="UniProtKB" id="Q7L622"/>
    </source>
</evidence>
<evidence type="ECO:0000255" key="2">
    <source>
        <dbReference type="PROSITE-ProRule" id="PRU00104"/>
    </source>
</evidence>
<evidence type="ECO:0000255" key="3">
    <source>
        <dbReference type="PROSITE-ProRule" id="PRU01146"/>
    </source>
</evidence>
<evidence type="ECO:0000305" key="4"/>
<organism>
    <name type="scientific">Macaca fascicularis</name>
    <name type="common">Crab-eating macaque</name>
    <name type="synonym">Cynomolgus monkey</name>
    <dbReference type="NCBI Taxonomy" id="9541"/>
    <lineage>
        <taxon>Eukaryota</taxon>
        <taxon>Metazoa</taxon>
        <taxon>Chordata</taxon>
        <taxon>Craniata</taxon>
        <taxon>Vertebrata</taxon>
        <taxon>Euteleostomi</taxon>
        <taxon>Mammalia</taxon>
        <taxon>Eutheria</taxon>
        <taxon>Euarchontoglires</taxon>
        <taxon>Primates</taxon>
        <taxon>Haplorrhini</taxon>
        <taxon>Catarrhini</taxon>
        <taxon>Cercopithecidae</taxon>
        <taxon>Cercopithecinae</taxon>
        <taxon>Macaca</taxon>
    </lineage>
</organism>
<name>G2E3_MACFA</name>
<protein>
    <recommendedName>
        <fullName>G2/M phase-specific E3 ubiquitin-protein ligase</fullName>
        <ecNumber>2.3.2.26</ecNumber>
    </recommendedName>
    <alternativeName>
        <fullName>G2/M phase-specific HECT-type E3 ubiquitin transferase</fullName>
    </alternativeName>
</protein>
<comment type="function">
    <text evidence="1">E3 ubiquitin-protein ligase which accepts ubiquitin from an E2 ubiquitin-conjugating enzyme in the form of a thioester and then directly transfers the ubiquitin to targeted substrates. Essential in early embryonic development to prevent apoptotic death.</text>
</comment>
<comment type="catalytic activity">
    <reaction>
        <text>S-ubiquitinyl-[E2 ubiquitin-conjugating enzyme]-L-cysteine + [acceptor protein]-L-lysine = [E2 ubiquitin-conjugating enzyme]-L-cysteine + N(6)-ubiquitinyl-[acceptor protein]-L-lysine.</text>
        <dbReference type="EC" id="2.3.2.26"/>
    </reaction>
</comment>
<comment type="pathway">
    <text>Protein modification; protein ubiquitination.</text>
</comment>
<comment type="subcellular location">
    <subcellularLocation>
        <location evidence="1">Nucleus</location>
        <location evidence="1">Nucleolus</location>
    </subcellularLocation>
    <subcellularLocation>
        <location evidence="1">Cytoplasm</location>
    </subcellularLocation>
    <text evidence="1">Shuttles between the nucleus and the cytoplasm. In the nucleus, delocalizes from the nucleolus to the nucleoplasm in response to DNA damage.</text>
</comment>
<comment type="domain">
    <text evidence="1">Ubiquitin ligase activity is mediated by two distinct domains, PHD-type zinc fingers 2 and 3. The use of these distinct domains may allow ubiquitination of different targets by each domain. The HECT domain is catalytically inactive and does not contribute to this activity.</text>
</comment>
<proteinExistence type="evidence at transcript level"/>
<reference key="1">
    <citation type="submission" date="2005-06" db="EMBL/GenBank/DDBJ databases">
        <title>DNA sequences of macaque genes expressed in brain or testis and its evolutionary implications.</title>
        <authorList>
            <consortium name="International consortium for macaque cDNA sequencing and analysis"/>
        </authorList>
    </citation>
    <scope>NUCLEOTIDE SEQUENCE [LARGE SCALE MRNA]</scope>
    <source>
        <tissue>Testis</tissue>
    </source>
</reference>
<dbReference type="EC" id="2.3.2.26"/>
<dbReference type="EMBL" id="AB168872">
    <property type="protein sequence ID" value="BAE00975.1"/>
    <property type="molecule type" value="mRNA"/>
</dbReference>
<dbReference type="EMBL" id="AB168172">
    <property type="protein sequence ID" value="BAE00297.1"/>
    <property type="molecule type" value="mRNA"/>
</dbReference>
<dbReference type="RefSeq" id="NP_001274208.1">
    <property type="nucleotide sequence ID" value="NM_001287279.1"/>
</dbReference>
<dbReference type="RefSeq" id="XP_005561068.1">
    <property type="nucleotide sequence ID" value="XM_005561011.1"/>
</dbReference>
<dbReference type="RefSeq" id="XP_015308755.1">
    <property type="nucleotide sequence ID" value="XM_015453269.1"/>
</dbReference>
<dbReference type="RefSeq" id="XP_015308756.1">
    <property type="nucleotide sequence ID" value="XM_015453270.1"/>
</dbReference>
<dbReference type="RefSeq" id="XP_015308757.1">
    <property type="nucleotide sequence ID" value="XM_015453271.1"/>
</dbReference>
<dbReference type="SMR" id="Q4R9C4"/>
<dbReference type="STRING" id="9541.ENSMFAP00000007252"/>
<dbReference type="GeneID" id="102142778"/>
<dbReference type="CTD" id="55632"/>
<dbReference type="eggNOG" id="KOG1084">
    <property type="taxonomic scope" value="Eukaryota"/>
</dbReference>
<dbReference type="UniPathway" id="UPA00143"/>
<dbReference type="Proteomes" id="UP000233100">
    <property type="component" value="Unplaced"/>
</dbReference>
<dbReference type="GO" id="GO:0005737">
    <property type="term" value="C:cytoplasm"/>
    <property type="evidence" value="ECO:0007669"/>
    <property type="project" value="UniProtKB-SubCell"/>
</dbReference>
<dbReference type="GO" id="GO:0005730">
    <property type="term" value="C:nucleolus"/>
    <property type="evidence" value="ECO:0007669"/>
    <property type="project" value="UniProtKB-SubCell"/>
</dbReference>
<dbReference type="GO" id="GO:0004842">
    <property type="term" value="F:ubiquitin-protein transferase activity"/>
    <property type="evidence" value="ECO:0007669"/>
    <property type="project" value="InterPro"/>
</dbReference>
<dbReference type="GO" id="GO:0008270">
    <property type="term" value="F:zinc ion binding"/>
    <property type="evidence" value="ECO:0007669"/>
    <property type="project" value="UniProtKB-KW"/>
</dbReference>
<dbReference type="GO" id="GO:0006915">
    <property type="term" value="P:apoptotic process"/>
    <property type="evidence" value="ECO:0007669"/>
    <property type="project" value="UniProtKB-KW"/>
</dbReference>
<dbReference type="GO" id="GO:0016567">
    <property type="term" value="P:protein ubiquitination"/>
    <property type="evidence" value="ECO:0007669"/>
    <property type="project" value="UniProtKB-UniPathway"/>
</dbReference>
<dbReference type="CDD" id="cd15669">
    <property type="entry name" value="ePHD_PHF7_G2E3_like"/>
    <property type="match status" value="1"/>
</dbReference>
<dbReference type="CDD" id="cd15496">
    <property type="entry name" value="PHD_PHF7_G2E3_like"/>
    <property type="match status" value="1"/>
</dbReference>
<dbReference type="FunFam" id="3.30.40.10:FF:000132">
    <property type="entry name" value="G2/M phase-specific E3 ubiquitin-protein ligase"/>
    <property type="match status" value="1"/>
</dbReference>
<dbReference type="FunFam" id="3.90.1750.10:FF:000049">
    <property type="entry name" value="G2/M phase-specific E3 ubiquitin-protein ligase"/>
    <property type="match status" value="1"/>
</dbReference>
<dbReference type="FunFam" id="3.30.40.10:FF:000192">
    <property type="entry name" value="G2/M phase-specific E3 ubiquitin-protein ligase isoform X1"/>
    <property type="match status" value="1"/>
</dbReference>
<dbReference type="Gene3D" id="3.30.2410.10">
    <property type="entry name" value="Hect, E3 ligase catalytic domain"/>
    <property type="match status" value="1"/>
</dbReference>
<dbReference type="Gene3D" id="3.90.1750.10">
    <property type="entry name" value="Hect, E3 ligase catalytic domains"/>
    <property type="match status" value="1"/>
</dbReference>
<dbReference type="Gene3D" id="3.30.40.10">
    <property type="entry name" value="Zinc/RING finger domain, C3HC4 (zinc finger)"/>
    <property type="match status" value="2"/>
</dbReference>
<dbReference type="InterPro" id="IPR034732">
    <property type="entry name" value="EPHD"/>
</dbReference>
<dbReference type="InterPro" id="IPR000569">
    <property type="entry name" value="HECT_dom"/>
</dbReference>
<dbReference type="InterPro" id="IPR035983">
    <property type="entry name" value="Hect_E3_ubiquitin_ligase"/>
</dbReference>
<dbReference type="InterPro" id="IPR051188">
    <property type="entry name" value="PHD-type_Zinc_Finger"/>
</dbReference>
<dbReference type="InterPro" id="IPR042013">
    <property type="entry name" value="PHF7/G2E3_ePHD"/>
</dbReference>
<dbReference type="InterPro" id="IPR042012">
    <property type="entry name" value="PHF7/G2E3_PHD"/>
</dbReference>
<dbReference type="InterPro" id="IPR019786">
    <property type="entry name" value="Zinc_finger_PHD-type_CS"/>
</dbReference>
<dbReference type="InterPro" id="IPR011011">
    <property type="entry name" value="Znf_FYVE_PHD"/>
</dbReference>
<dbReference type="InterPro" id="IPR001965">
    <property type="entry name" value="Znf_PHD"/>
</dbReference>
<dbReference type="InterPro" id="IPR013083">
    <property type="entry name" value="Znf_RING/FYVE/PHD"/>
</dbReference>
<dbReference type="PANTHER" id="PTHR12420:SF37">
    <property type="entry name" value="G2_M PHASE-SPECIFIC E3 UBIQUITIN-PROTEIN LIGASE"/>
    <property type="match status" value="1"/>
</dbReference>
<dbReference type="PANTHER" id="PTHR12420">
    <property type="entry name" value="PHD FINGER PROTEIN"/>
    <property type="match status" value="1"/>
</dbReference>
<dbReference type="Pfam" id="PF00632">
    <property type="entry name" value="HECT"/>
    <property type="match status" value="1"/>
</dbReference>
<dbReference type="Pfam" id="PF13771">
    <property type="entry name" value="zf-HC5HC2H"/>
    <property type="match status" value="1"/>
</dbReference>
<dbReference type="SMART" id="SM00119">
    <property type="entry name" value="HECTc"/>
    <property type="match status" value="1"/>
</dbReference>
<dbReference type="SMART" id="SM00249">
    <property type="entry name" value="PHD"/>
    <property type="match status" value="2"/>
</dbReference>
<dbReference type="SUPFAM" id="SSF57903">
    <property type="entry name" value="FYVE/PHD zinc finger"/>
    <property type="match status" value="1"/>
</dbReference>
<dbReference type="SUPFAM" id="SSF56204">
    <property type="entry name" value="Hect, E3 ligase catalytic domain"/>
    <property type="match status" value="1"/>
</dbReference>
<dbReference type="PROSITE" id="PS51805">
    <property type="entry name" value="EPHD"/>
    <property type="match status" value="1"/>
</dbReference>
<dbReference type="PROSITE" id="PS50237">
    <property type="entry name" value="HECT"/>
    <property type="match status" value="1"/>
</dbReference>
<dbReference type="PROSITE" id="PS01359">
    <property type="entry name" value="ZF_PHD_1"/>
    <property type="match status" value="1"/>
</dbReference>
<feature type="chain" id="PRO_0000248344" description="G2/M phase-specific E3 ubiquitin-protein ligase">
    <location>
        <begin position="1"/>
        <end position="706"/>
    </location>
</feature>
<feature type="domain" description="HECT" evidence="2">
    <location>
        <begin position="371"/>
        <end position="698"/>
    </location>
</feature>
<feature type="zinc finger region" description="C2HC pre-PHD-type" evidence="3">
    <location>
        <begin position="11"/>
        <end position="51"/>
    </location>
</feature>
<feature type="zinc finger region" description="PHD-type 1" evidence="3">
    <location>
        <begin position="79"/>
        <end position="128"/>
    </location>
</feature>
<feature type="zinc finger region" description="PHD-type 2; degenerate">
    <location>
        <begin position="143"/>
        <end position="193"/>
    </location>
</feature>
<feature type="zinc finger region" description="PHD-type 3">
    <location>
        <begin position="237"/>
        <end position="286"/>
    </location>
</feature>
<feature type="sequence conflict" description="In Ref. 1; BAE00975." evidence="4" ref="1">
    <original>K</original>
    <variation>R</variation>
    <location>
        <position position="30"/>
    </location>
</feature>
<feature type="sequence conflict" description="In Ref. 1; BAE00975." evidence="4" ref="1">
    <original>K</original>
    <variation>R</variation>
    <location>
        <position position="256"/>
    </location>
</feature>
<feature type="sequence conflict" description="In Ref. 1; BAE00297." evidence="4" ref="1">
    <original>S</original>
    <variation>N</variation>
    <location>
        <position position="589"/>
    </location>
</feature>
<accession>Q4R9C4</accession>
<accession>Q4R7E7</accession>
<sequence>MNENKPGDSQNLACVFCRKNDDCPNKYGEKKTKEKWNLTVHYYCLLMSSGIWQRGKEEEGVYGFLIEDIRKEVNRASKLKCCVCKKNGASIGCVAPRCKRSYHFPCGLQRECIFQFTGNFASFCWNHRPVQIITSNNYRESLPCTICLEFIEPIPSYNILRSPCCKNAWFHRDCLQVQAINAGVFFFRCTICSNSDIFQKEMLRMGIHIPEKDASWELEENAYQELLQHHERCDVRRCRCKEGRDYNAPDSKWEIKRCQCCGSSGTHLACSSLRSWEQNWECLECRGIIYNSGEFQKAKKHVLPNSNNVGITDCLLEESSPKLPRQSPGSQSKDLLRQGSKFRRNVSTLLIELGFQIKKKTKRLYINKANIWTSALDAFRNRNFNPSYAIEVAYVIENDNFGSEHPGSKQEFLSLLMQHLENSSLFEGSLSKNLSLNSQALKENLYYEAGKMLAISLVHGGPSPGFFSKTLFNCLVYGPENTQPILDDVSDFDVAQIIIRINTATTVADLKSVINECYNYLELIGCLRLITTLSDKYMLVKDILVYHVIQRVQAPFESFKQGLKTLGVLEKIQAYPEAFCSILCHKPESLSAKILSDLFTVHTLPDVKALGFWNSYLQAVEDGKSTTTMEDILIFATGCSSIPPAGFKPTPSIECLPVDFPVGNKCNNCLAIPVTNTYKEFQENMDFTIRNTLKLEKEESSHYIGH</sequence>
<gene>
    <name type="primary">G2E3</name>
    <name type="ORF">QtsA-15505</name>
</gene>
<keyword id="KW-0053">Apoptosis</keyword>
<keyword id="KW-0963">Cytoplasm</keyword>
<keyword id="KW-0217">Developmental protein</keyword>
<keyword id="KW-0479">Metal-binding</keyword>
<keyword id="KW-0539">Nucleus</keyword>
<keyword id="KW-1185">Reference proteome</keyword>
<keyword id="KW-0677">Repeat</keyword>
<keyword id="KW-0808">Transferase</keyword>
<keyword id="KW-0833">Ubl conjugation pathway</keyword>
<keyword id="KW-0862">Zinc</keyword>
<keyword id="KW-0863">Zinc-finger</keyword>